<accession>P0CY85</accession>
<sequence>MEGRRFAAVLILPICMLAPGAVASKRWTRPSVCNLPAESGTGTQSLKRFYYNSDKMQCRTFIYKGNGGNDNNFPRTYDCQKKCLYRPG</sequence>
<feature type="signal peptide" evidence="3">
    <location>
        <begin position="1"/>
        <end position="23"/>
    </location>
</feature>
<feature type="chain" id="PRO_0000409987" description="Kunitz-type conkunitzin-B1">
    <location>
        <begin position="24"/>
        <end position="87"/>
    </location>
</feature>
<feature type="domain" description="BPTI/Kunitz inhibitor" evidence="4">
    <location>
        <begin position="33"/>
        <end position="83"/>
    </location>
</feature>
<feature type="modified residue" description="Proline amide" evidence="1">
    <location>
        <position position="87"/>
    </location>
</feature>
<feature type="disulfide bond" evidence="4">
    <location>
        <begin position="33"/>
        <end position="83"/>
    </location>
</feature>
<feature type="disulfide bond" evidence="4">
    <location>
        <begin position="58"/>
        <end position="79"/>
    </location>
</feature>
<keyword id="KW-0027">Amidation</keyword>
<keyword id="KW-1015">Disulfide bond</keyword>
<keyword id="KW-0872">Ion channel impairing toxin</keyword>
<keyword id="KW-0528">Neurotoxin</keyword>
<keyword id="KW-0632">Potassium channel impairing toxin</keyword>
<keyword id="KW-0646">Protease inhibitor</keyword>
<keyword id="KW-0964">Secreted</keyword>
<keyword id="KW-0722">Serine protease inhibitor</keyword>
<keyword id="KW-0732">Signal</keyword>
<keyword id="KW-0800">Toxin</keyword>
<keyword id="KW-1220">Voltage-gated potassium channel impairing toxin</keyword>
<organism>
    <name type="scientific">Conus bullatus</name>
    <name type="common">Bubble cone</name>
    <dbReference type="NCBI Taxonomy" id="89438"/>
    <lineage>
        <taxon>Eukaryota</taxon>
        <taxon>Metazoa</taxon>
        <taxon>Spiralia</taxon>
        <taxon>Lophotrochozoa</taxon>
        <taxon>Mollusca</taxon>
        <taxon>Gastropoda</taxon>
        <taxon>Caenogastropoda</taxon>
        <taxon>Neogastropoda</taxon>
        <taxon>Conoidea</taxon>
        <taxon>Conidae</taxon>
        <taxon>Conus</taxon>
        <taxon>Textilia</taxon>
    </lineage>
</organism>
<dbReference type="SMR" id="P0CY85"/>
<dbReference type="GO" id="GO:0005615">
    <property type="term" value="C:extracellular space"/>
    <property type="evidence" value="ECO:0007669"/>
    <property type="project" value="TreeGrafter"/>
</dbReference>
<dbReference type="GO" id="GO:0015459">
    <property type="term" value="F:potassium channel regulator activity"/>
    <property type="evidence" value="ECO:0007669"/>
    <property type="project" value="UniProtKB-KW"/>
</dbReference>
<dbReference type="GO" id="GO:0004867">
    <property type="term" value="F:serine-type endopeptidase inhibitor activity"/>
    <property type="evidence" value="ECO:0007669"/>
    <property type="project" value="UniProtKB-KW"/>
</dbReference>
<dbReference type="GO" id="GO:0090729">
    <property type="term" value="F:toxin activity"/>
    <property type="evidence" value="ECO:0007669"/>
    <property type="project" value="UniProtKB-KW"/>
</dbReference>
<dbReference type="CDD" id="cd22593">
    <property type="entry name" value="Kunitz_conkunitzin"/>
    <property type="match status" value="1"/>
</dbReference>
<dbReference type="Gene3D" id="4.10.410.10">
    <property type="entry name" value="Pancreatic trypsin inhibitor Kunitz domain"/>
    <property type="match status" value="1"/>
</dbReference>
<dbReference type="InterPro" id="IPR002223">
    <property type="entry name" value="Kunitz_BPTI"/>
</dbReference>
<dbReference type="InterPro" id="IPR036880">
    <property type="entry name" value="Kunitz_BPTI_sf"/>
</dbReference>
<dbReference type="InterPro" id="IPR050098">
    <property type="entry name" value="TFPI/VKTCI-like"/>
</dbReference>
<dbReference type="PANTHER" id="PTHR10083:SF374">
    <property type="entry name" value="BPTI_KUNITZ INHIBITOR DOMAIN-CONTAINING PROTEIN"/>
    <property type="match status" value="1"/>
</dbReference>
<dbReference type="PANTHER" id="PTHR10083">
    <property type="entry name" value="KUNITZ-TYPE PROTEASE INHIBITOR-RELATED"/>
    <property type="match status" value="1"/>
</dbReference>
<dbReference type="Pfam" id="PF00014">
    <property type="entry name" value="Kunitz_BPTI"/>
    <property type="match status" value="1"/>
</dbReference>
<dbReference type="PRINTS" id="PR00759">
    <property type="entry name" value="BASICPTASE"/>
</dbReference>
<dbReference type="SMART" id="SM00131">
    <property type="entry name" value="KU"/>
    <property type="match status" value="1"/>
</dbReference>
<dbReference type="SUPFAM" id="SSF57362">
    <property type="entry name" value="BPTI-like"/>
    <property type="match status" value="1"/>
</dbReference>
<dbReference type="PROSITE" id="PS50279">
    <property type="entry name" value="BPTI_KUNITZ_2"/>
    <property type="match status" value="1"/>
</dbReference>
<protein>
    <recommendedName>
        <fullName>Kunitz-type conkunitzin-B1</fullName>
        <shortName>Conk-B1</shortName>
    </recommendedName>
</protein>
<evidence type="ECO:0000250" key="1"/>
<evidence type="ECO:0000250" key="2">
    <source>
        <dbReference type="UniProtKB" id="P0C1X2"/>
    </source>
</evidence>
<evidence type="ECO:0000255" key="3"/>
<evidence type="ECO:0000255" key="4">
    <source>
        <dbReference type="PROSITE-ProRule" id="PRU00031"/>
    </source>
</evidence>
<evidence type="ECO:0000305" key="5"/>
<evidence type="ECO:0000305" key="6">
    <source>
    </source>
</evidence>
<proteinExistence type="inferred from homology"/>
<comment type="function">
    <text evidence="2">Blocks specifically voltage-activated potassium channels (Kv) of the Shaker family.</text>
</comment>
<comment type="subcellular location">
    <subcellularLocation>
        <location evidence="6">Secreted</location>
    </subcellularLocation>
</comment>
<comment type="tissue specificity">
    <text evidence="6">Expressed by the venom duct.</text>
</comment>
<comment type="PTM">
    <text>Contains 2 disulfide bonds instead of 3, as for all Kunitz domain proteins.</text>
</comment>
<comment type="similarity">
    <text evidence="5">Belongs to the venom Kunitz-type family.</text>
</comment>
<reference key="1">
    <citation type="journal article" date="2011" name="BMC Genomics">
        <title>Characterization of the Conus bullatus genome and its venom-duct transcriptome.</title>
        <authorList>
            <person name="Hu H."/>
            <person name="Bandyopadhyay P.K."/>
            <person name="Olivera B.M."/>
            <person name="Yandell M."/>
        </authorList>
    </citation>
    <scope>NUCLEOTIDE SEQUENCE [MRNA]</scope>
    <source>
        <tissue>Venom duct</tissue>
    </source>
</reference>
<name>VKTB1_CONBU</name>